<keyword id="KW-0175">Coiled coil</keyword>
<keyword id="KW-0238">DNA-binding</keyword>
<keyword id="KW-0539">Nucleus</keyword>
<keyword id="KW-1185">Reference proteome</keyword>
<keyword id="KW-0804">Transcription</keyword>
<keyword id="KW-0805">Transcription regulation</keyword>
<protein>
    <recommendedName>
        <fullName>Protein RKD5</fullName>
        <shortName>AtRKD5</shortName>
    </recommendedName>
    <alternativeName>
        <fullName>RWP-RK domain-containing protein 5</fullName>
    </alternativeName>
</protein>
<proteinExistence type="inferred from homology"/>
<name>RKD5_ARATH</name>
<gene>
    <name type="primary">RKD5</name>
    <name type="ordered locus">At4g35590</name>
    <name type="ORF">F8D20.100</name>
</gene>
<sequence length="370" mass="43358">MVDQGFFTLKKEKKKNILIKLFYVKILGFCFCDSWSSSDMAHSLTSLAVFQSVIRKEMVRSLHVYESVEIEREFWFKSKSCYVEKKAKPLFRSEDFRRPEISEGSVFGTWRCIFVFRFNHSLPRFPTLLCLSRNPKLEDIPNLANELKFISELKPSKIYEEEQCSSSTEGYYNSDLPKPRKLVLKQDLNCLPDSETESEESVNEKTEHSEFENDKTEQSESDAKTEILKKKKRTPSRHVAELSLEELSKYFDLTIVEASRNLKVGLTVLKKKCREFGIPRWPHRKIKSLDCLIHDLQREAEKQQEKNEAAAMAVAKKQEKLETEKRNIVKRPFMEIGIETKKFRQENFKKRHRASRAKKNQESLVTSSST</sequence>
<organism>
    <name type="scientific">Arabidopsis thaliana</name>
    <name type="common">Mouse-ear cress</name>
    <dbReference type="NCBI Taxonomy" id="3702"/>
    <lineage>
        <taxon>Eukaryota</taxon>
        <taxon>Viridiplantae</taxon>
        <taxon>Streptophyta</taxon>
        <taxon>Embryophyta</taxon>
        <taxon>Tracheophyta</taxon>
        <taxon>Spermatophyta</taxon>
        <taxon>Magnoliopsida</taxon>
        <taxon>eudicotyledons</taxon>
        <taxon>Gunneridae</taxon>
        <taxon>Pentapetalae</taxon>
        <taxon>rosids</taxon>
        <taxon>malvids</taxon>
        <taxon>Brassicales</taxon>
        <taxon>Brassicaceae</taxon>
        <taxon>Camelineae</taxon>
        <taxon>Arabidopsis</taxon>
    </lineage>
</organism>
<reference key="1">
    <citation type="journal article" date="1999" name="Nature">
        <title>Sequence and analysis of chromosome 4 of the plant Arabidopsis thaliana.</title>
        <authorList>
            <person name="Mayer K.F.X."/>
            <person name="Schueller C."/>
            <person name="Wambutt R."/>
            <person name="Murphy G."/>
            <person name="Volckaert G."/>
            <person name="Pohl T."/>
            <person name="Duesterhoeft A."/>
            <person name="Stiekema W."/>
            <person name="Entian K.-D."/>
            <person name="Terryn N."/>
            <person name="Harris B."/>
            <person name="Ansorge W."/>
            <person name="Brandt P."/>
            <person name="Grivell L.A."/>
            <person name="Rieger M."/>
            <person name="Weichselgartner M."/>
            <person name="de Simone V."/>
            <person name="Obermaier B."/>
            <person name="Mache R."/>
            <person name="Mueller M."/>
            <person name="Kreis M."/>
            <person name="Delseny M."/>
            <person name="Puigdomenech P."/>
            <person name="Watson M."/>
            <person name="Schmidtheini T."/>
            <person name="Reichert B."/>
            <person name="Portetelle D."/>
            <person name="Perez-Alonso M."/>
            <person name="Boutry M."/>
            <person name="Bancroft I."/>
            <person name="Vos P."/>
            <person name="Hoheisel J."/>
            <person name="Zimmermann W."/>
            <person name="Wedler H."/>
            <person name="Ridley P."/>
            <person name="Langham S.-A."/>
            <person name="McCullagh B."/>
            <person name="Bilham L."/>
            <person name="Robben J."/>
            <person name="van der Schueren J."/>
            <person name="Grymonprez B."/>
            <person name="Chuang Y.-J."/>
            <person name="Vandenbussche F."/>
            <person name="Braeken M."/>
            <person name="Weltjens I."/>
            <person name="Voet M."/>
            <person name="Bastiaens I."/>
            <person name="Aert R."/>
            <person name="Defoor E."/>
            <person name="Weitzenegger T."/>
            <person name="Bothe G."/>
            <person name="Ramsperger U."/>
            <person name="Hilbert H."/>
            <person name="Braun M."/>
            <person name="Holzer E."/>
            <person name="Brandt A."/>
            <person name="Peters S."/>
            <person name="van Staveren M."/>
            <person name="Dirkse W."/>
            <person name="Mooijman P."/>
            <person name="Klein Lankhorst R."/>
            <person name="Rose M."/>
            <person name="Hauf J."/>
            <person name="Koetter P."/>
            <person name="Berneiser S."/>
            <person name="Hempel S."/>
            <person name="Feldpausch M."/>
            <person name="Lamberth S."/>
            <person name="Van den Daele H."/>
            <person name="De Keyser A."/>
            <person name="Buysshaert C."/>
            <person name="Gielen J."/>
            <person name="Villarroel R."/>
            <person name="De Clercq R."/>
            <person name="van Montagu M."/>
            <person name="Rogers J."/>
            <person name="Cronin A."/>
            <person name="Quail M.A."/>
            <person name="Bray-Allen S."/>
            <person name="Clark L."/>
            <person name="Doggett J."/>
            <person name="Hall S."/>
            <person name="Kay M."/>
            <person name="Lennard N."/>
            <person name="McLay K."/>
            <person name="Mayes R."/>
            <person name="Pettett A."/>
            <person name="Rajandream M.A."/>
            <person name="Lyne M."/>
            <person name="Benes V."/>
            <person name="Rechmann S."/>
            <person name="Borkova D."/>
            <person name="Bloecker H."/>
            <person name="Scharfe M."/>
            <person name="Grimm M."/>
            <person name="Loehnert T.-H."/>
            <person name="Dose S."/>
            <person name="de Haan M."/>
            <person name="Maarse A.C."/>
            <person name="Schaefer M."/>
            <person name="Mueller-Auer S."/>
            <person name="Gabel C."/>
            <person name="Fuchs M."/>
            <person name="Fartmann B."/>
            <person name="Granderath K."/>
            <person name="Dauner D."/>
            <person name="Herzl A."/>
            <person name="Neumann S."/>
            <person name="Argiriou A."/>
            <person name="Vitale D."/>
            <person name="Liguori R."/>
            <person name="Piravandi E."/>
            <person name="Massenet O."/>
            <person name="Quigley F."/>
            <person name="Clabauld G."/>
            <person name="Muendlein A."/>
            <person name="Felber R."/>
            <person name="Schnabl S."/>
            <person name="Hiller R."/>
            <person name="Schmidt W."/>
            <person name="Lecharny A."/>
            <person name="Aubourg S."/>
            <person name="Chefdor F."/>
            <person name="Cooke R."/>
            <person name="Berger C."/>
            <person name="Monfort A."/>
            <person name="Casacuberta E."/>
            <person name="Gibbons T."/>
            <person name="Weber N."/>
            <person name="Vandenbol M."/>
            <person name="Bargues M."/>
            <person name="Terol J."/>
            <person name="Torres A."/>
            <person name="Perez-Perez A."/>
            <person name="Purnelle B."/>
            <person name="Bent E."/>
            <person name="Johnson S."/>
            <person name="Tacon D."/>
            <person name="Jesse T."/>
            <person name="Heijnen L."/>
            <person name="Schwarz S."/>
            <person name="Scholler P."/>
            <person name="Heber S."/>
            <person name="Francs P."/>
            <person name="Bielke C."/>
            <person name="Frishman D."/>
            <person name="Haase D."/>
            <person name="Lemcke K."/>
            <person name="Mewes H.-W."/>
            <person name="Stocker S."/>
            <person name="Zaccaria P."/>
            <person name="Bevan M."/>
            <person name="Wilson R.K."/>
            <person name="de la Bastide M."/>
            <person name="Habermann K."/>
            <person name="Parnell L."/>
            <person name="Dedhia N."/>
            <person name="Gnoj L."/>
            <person name="Schutz K."/>
            <person name="Huang E."/>
            <person name="Spiegel L."/>
            <person name="Sekhon M."/>
            <person name="Murray J."/>
            <person name="Sheet P."/>
            <person name="Cordes M."/>
            <person name="Abu-Threideh J."/>
            <person name="Stoneking T."/>
            <person name="Kalicki J."/>
            <person name="Graves T."/>
            <person name="Harmon G."/>
            <person name="Edwards J."/>
            <person name="Latreille P."/>
            <person name="Courtney L."/>
            <person name="Cloud J."/>
            <person name="Abbott A."/>
            <person name="Scott K."/>
            <person name="Johnson D."/>
            <person name="Minx P."/>
            <person name="Bentley D."/>
            <person name="Fulton B."/>
            <person name="Miller N."/>
            <person name="Greco T."/>
            <person name="Kemp K."/>
            <person name="Kramer J."/>
            <person name="Fulton L."/>
            <person name="Mardis E."/>
            <person name="Dante M."/>
            <person name="Pepin K."/>
            <person name="Hillier L.W."/>
            <person name="Nelson J."/>
            <person name="Spieth J."/>
            <person name="Ryan E."/>
            <person name="Andrews S."/>
            <person name="Geisel C."/>
            <person name="Layman D."/>
            <person name="Du H."/>
            <person name="Ali J."/>
            <person name="Berghoff A."/>
            <person name="Jones K."/>
            <person name="Drone K."/>
            <person name="Cotton M."/>
            <person name="Joshu C."/>
            <person name="Antonoiu B."/>
            <person name="Zidanic M."/>
            <person name="Strong C."/>
            <person name="Sun H."/>
            <person name="Lamar B."/>
            <person name="Yordan C."/>
            <person name="Ma P."/>
            <person name="Zhong J."/>
            <person name="Preston R."/>
            <person name="Vil D."/>
            <person name="Shekher M."/>
            <person name="Matero A."/>
            <person name="Shah R."/>
            <person name="Swaby I.K."/>
            <person name="O'Shaughnessy A."/>
            <person name="Rodriguez M."/>
            <person name="Hoffman J."/>
            <person name="Till S."/>
            <person name="Granat S."/>
            <person name="Shohdy N."/>
            <person name="Hasegawa A."/>
            <person name="Hameed A."/>
            <person name="Lodhi M."/>
            <person name="Johnson A."/>
            <person name="Chen E."/>
            <person name="Marra M.A."/>
            <person name="Martienssen R."/>
            <person name="McCombie W.R."/>
        </authorList>
    </citation>
    <scope>NUCLEOTIDE SEQUENCE [LARGE SCALE GENOMIC DNA]</scope>
    <source>
        <strain>cv. Columbia</strain>
    </source>
</reference>
<reference key="2">
    <citation type="journal article" date="2017" name="Plant J.">
        <title>Araport11: a complete reannotation of the Arabidopsis thaliana reference genome.</title>
        <authorList>
            <person name="Cheng C.Y."/>
            <person name="Krishnakumar V."/>
            <person name="Chan A.P."/>
            <person name="Thibaud-Nissen F."/>
            <person name="Schobel S."/>
            <person name="Town C.D."/>
        </authorList>
    </citation>
    <scope>GENOME REANNOTATION</scope>
    <source>
        <strain>cv. Columbia</strain>
    </source>
</reference>
<reference key="3">
    <citation type="journal article" date="2005" name="J. Mol. Evol.">
        <title>Evolution of NIN-like proteins in Arabidopsis, rice, and Lotus japonicus.</title>
        <authorList>
            <person name="Schauser L."/>
            <person name="Wieloch W."/>
            <person name="Stougaard J."/>
        </authorList>
    </citation>
    <scope>GENE FAMILY</scope>
    <scope>NOMENCLATURE</scope>
</reference>
<accession>O81791</accession>
<feature type="chain" id="PRO_0000401499" description="Protein RKD5">
    <location>
        <begin position="1"/>
        <end position="370"/>
    </location>
</feature>
<feature type="domain" description="RWP-RK" evidence="3">
    <location>
        <begin position="224"/>
        <end position="309"/>
    </location>
</feature>
<feature type="region of interest" description="Disordered" evidence="4">
    <location>
        <begin position="193"/>
        <end position="232"/>
    </location>
</feature>
<feature type="region of interest" description="Disordered" evidence="4">
    <location>
        <begin position="347"/>
        <end position="370"/>
    </location>
</feature>
<feature type="coiled-coil region" evidence="2">
    <location>
        <begin position="283"/>
        <end position="328"/>
    </location>
</feature>
<feature type="compositionally biased region" description="Basic and acidic residues" evidence="4">
    <location>
        <begin position="202"/>
        <end position="228"/>
    </location>
</feature>
<feature type="compositionally biased region" description="Basic residues" evidence="4">
    <location>
        <begin position="349"/>
        <end position="358"/>
    </location>
</feature>
<dbReference type="EMBL" id="AL031135">
    <property type="protein sequence ID" value="CAA20029.1"/>
    <property type="molecule type" value="Genomic_DNA"/>
</dbReference>
<dbReference type="EMBL" id="AL161587">
    <property type="protein sequence ID" value="CAB80275.1"/>
    <property type="molecule type" value="Genomic_DNA"/>
</dbReference>
<dbReference type="EMBL" id="CP002687">
    <property type="protein sequence ID" value="AEE86537.1"/>
    <property type="molecule type" value="Genomic_DNA"/>
</dbReference>
<dbReference type="PIR" id="T04664">
    <property type="entry name" value="T04664"/>
</dbReference>
<dbReference type="RefSeq" id="NP_195284.1">
    <property type="nucleotide sequence ID" value="NM_119724.2"/>
</dbReference>
<dbReference type="SMR" id="O81791"/>
<dbReference type="STRING" id="3702.O81791"/>
<dbReference type="PaxDb" id="3702-AT4G35590.1"/>
<dbReference type="EnsemblPlants" id="AT4G35590.1">
    <property type="protein sequence ID" value="AT4G35590.1"/>
    <property type="gene ID" value="AT4G35590"/>
</dbReference>
<dbReference type="GeneID" id="829711"/>
<dbReference type="Gramene" id="AT4G35590.1">
    <property type="protein sequence ID" value="AT4G35590.1"/>
    <property type="gene ID" value="AT4G35590"/>
</dbReference>
<dbReference type="KEGG" id="ath:AT4G35590"/>
<dbReference type="Araport" id="AT4G35590"/>
<dbReference type="TAIR" id="AT4G35590">
    <property type="gene designation" value="RKD5"/>
</dbReference>
<dbReference type="eggNOG" id="ENOG502QSPQ">
    <property type="taxonomic scope" value="Eukaryota"/>
</dbReference>
<dbReference type="HOGENOM" id="CLU_073979_0_0_1"/>
<dbReference type="InParanoid" id="O81791"/>
<dbReference type="OMA" id="GSYVEMQ"/>
<dbReference type="PhylomeDB" id="O81791"/>
<dbReference type="PRO" id="PR:O81791"/>
<dbReference type="Proteomes" id="UP000006548">
    <property type="component" value="Chromosome 4"/>
</dbReference>
<dbReference type="ExpressionAtlas" id="O81791">
    <property type="expression patterns" value="baseline and differential"/>
</dbReference>
<dbReference type="GO" id="GO:0005634">
    <property type="term" value="C:nucleus"/>
    <property type="evidence" value="ECO:0007669"/>
    <property type="project" value="UniProtKB-SubCell"/>
</dbReference>
<dbReference type="GO" id="GO:0003677">
    <property type="term" value="F:DNA binding"/>
    <property type="evidence" value="ECO:0007669"/>
    <property type="project" value="UniProtKB-KW"/>
</dbReference>
<dbReference type="GO" id="GO:0003700">
    <property type="term" value="F:DNA-binding transcription factor activity"/>
    <property type="evidence" value="ECO:0000250"/>
    <property type="project" value="TAIR"/>
</dbReference>
<dbReference type="GO" id="GO:0006355">
    <property type="term" value="P:regulation of DNA-templated transcription"/>
    <property type="evidence" value="ECO:0000304"/>
    <property type="project" value="TAIR"/>
</dbReference>
<dbReference type="InterPro" id="IPR044607">
    <property type="entry name" value="RKD-like"/>
</dbReference>
<dbReference type="InterPro" id="IPR003035">
    <property type="entry name" value="RWP-RK_dom"/>
</dbReference>
<dbReference type="PANTHER" id="PTHR46373">
    <property type="entry name" value="PROTEIN RKD4"/>
    <property type="match status" value="1"/>
</dbReference>
<dbReference type="PANTHER" id="PTHR46373:SF12">
    <property type="entry name" value="PROTEIN RKD5"/>
    <property type="match status" value="1"/>
</dbReference>
<dbReference type="Pfam" id="PF02042">
    <property type="entry name" value="RWP-RK"/>
    <property type="match status" value="1"/>
</dbReference>
<dbReference type="PROSITE" id="PS51519">
    <property type="entry name" value="RWP_RK"/>
    <property type="match status" value="1"/>
</dbReference>
<evidence type="ECO:0000250" key="1"/>
<evidence type="ECO:0000255" key="2"/>
<evidence type="ECO:0000255" key="3">
    <source>
        <dbReference type="PROSITE-ProRule" id="PRU00852"/>
    </source>
</evidence>
<evidence type="ECO:0000256" key="4">
    <source>
        <dbReference type="SAM" id="MobiDB-lite"/>
    </source>
</evidence>
<comment type="function">
    <text evidence="1">Putative transcription factor.</text>
</comment>
<comment type="subcellular location">
    <subcellularLocation>
        <location evidence="3">Nucleus</location>
    </subcellularLocation>
</comment>